<proteinExistence type="inferred from homology"/>
<organism>
    <name type="scientific">Neisseria meningitidis serogroup B (strain ATCC BAA-335 / MC58)</name>
    <dbReference type="NCBI Taxonomy" id="122586"/>
    <lineage>
        <taxon>Bacteria</taxon>
        <taxon>Pseudomonadati</taxon>
        <taxon>Pseudomonadota</taxon>
        <taxon>Betaproteobacteria</taxon>
        <taxon>Neisseriales</taxon>
        <taxon>Neisseriaceae</taxon>
        <taxon>Neisseria</taxon>
    </lineage>
</organism>
<gene>
    <name evidence="1" type="primary">pncB</name>
    <name type="ordered locus">NMB1505</name>
</gene>
<dbReference type="EC" id="6.3.4.21" evidence="1"/>
<dbReference type="EMBL" id="AE002098">
    <property type="protein sequence ID" value="AAF41861.1"/>
    <property type="molecule type" value="Genomic_DNA"/>
</dbReference>
<dbReference type="PIR" id="E81075">
    <property type="entry name" value="E81075"/>
</dbReference>
<dbReference type="RefSeq" id="NP_274513.1">
    <property type="nucleotide sequence ID" value="NC_003112.2"/>
</dbReference>
<dbReference type="RefSeq" id="WP_002225072.1">
    <property type="nucleotide sequence ID" value="NC_003112.2"/>
</dbReference>
<dbReference type="SMR" id="Q9JYM9"/>
<dbReference type="FunCoup" id="Q9JYM9">
    <property type="interactions" value="286"/>
</dbReference>
<dbReference type="STRING" id="122586.NMB1505"/>
<dbReference type="PaxDb" id="122586-NMB1505"/>
<dbReference type="KEGG" id="nme:NMB1505"/>
<dbReference type="PATRIC" id="fig|122586.8.peg.1906"/>
<dbReference type="HOGENOM" id="CLU_030991_1_0_4"/>
<dbReference type="InParanoid" id="Q9JYM9"/>
<dbReference type="OrthoDB" id="9771406at2"/>
<dbReference type="UniPathway" id="UPA00253">
    <property type="reaction ID" value="UER00457"/>
</dbReference>
<dbReference type="Proteomes" id="UP000000425">
    <property type="component" value="Chromosome"/>
</dbReference>
<dbReference type="GO" id="GO:0005829">
    <property type="term" value="C:cytosol"/>
    <property type="evidence" value="ECO:0000318"/>
    <property type="project" value="GO_Central"/>
</dbReference>
<dbReference type="GO" id="GO:0004516">
    <property type="term" value="F:nicotinate phosphoribosyltransferase activity"/>
    <property type="evidence" value="ECO:0000318"/>
    <property type="project" value="GO_Central"/>
</dbReference>
<dbReference type="GO" id="GO:0034355">
    <property type="term" value="P:NAD biosynthetic process via the salvage pathway"/>
    <property type="evidence" value="ECO:0000318"/>
    <property type="project" value="GO_Central"/>
</dbReference>
<dbReference type="CDD" id="cd01401">
    <property type="entry name" value="PncB_like"/>
    <property type="match status" value="1"/>
</dbReference>
<dbReference type="FunFam" id="3.20.140.10:FF:000008">
    <property type="entry name" value="Nicotinate phosphoribosyltransferase"/>
    <property type="match status" value="1"/>
</dbReference>
<dbReference type="Gene3D" id="3.20.140.10">
    <property type="entry name" value="nicotinate phosphoribosyltransferase"/>
    <property type="match status" value="1"/>
</dbReference>
<dbReference type="HAMAP" id="MF_00570">
    <property type="entry name" value="NAPRTase"/>
    <property type="match status" value="1"/>
</dbReference>
<dbReference type="InterPro" id="IPR041525">
    <property type="entry name" value="N/Namide_PRibTrfase"/>
</dbReference>
<dbReference type="InterPro" id="IPR040727">
    <property type="entry name" value="NAPRTase_N"/>
</dbReference>
<dbReference type="InterPro" id="IPR006406">
    <property type="entry name" value="Nic_PRibTrfase"/>
</dbReference>
<dbReference type="InterPro" id="IPR007229">
    <property type="entry name" value="Nic_PRibTrfase-Fam"/>
</dbReference>
<dbReference type="InterPro" id="IPR036068">
    <property type="entry name" value="Nicotinate_pribotase-like_C"/>
</dbReference>
<dbReference type="NCBIfam" id="TIGR01514">
    <property type="entry name" value="NAPRTase"/>
    <property type="match status" value="1"/>
</dbReference>
<dbReference type="NCBIfam" id="NF003704">
    <property type="entry name" value="PRK05321.1"/>
    <property type="match status" value="1"/>
</dbReference>
<dbReference type="PANTHER" id="PTHR11098">
    <property type="entry name" value="NICOTINATE PHOSPHORIBOSYLTRANSFERASE"/>
    <property type="match status" value="1"/>
</dbReference>
<dbReference type="PANTHER" id="PTHR11098:SF1">
    <property type="entry name" value="NICOTINATE PHOSPHORIBOSYLTRANSFERASE"/>
    <property type="match status" value="1"/>
</dbReference>
<dbReference type="Pfam" id="PF04095">
    <property type="entry name" value="NAPRTase"/>
    <property type="match status" value="1"/>
</dbReference>
<dbReference type="Pfam" id="PF17767">
    <property type="entry name" value="NAPRTase_N"/>
    <property type="match status" value="1"/>
</dbReference>
<dbReference type="PIRSF" id="PIRSF000484">
    <property type="entry name" value="NAPRT"/>
    <property type="match status" value="1"/>
</dbReference>
<dbReference type="SUPFAM" id="SSF51690">
    <property type="entry name" value="Nicotinate/Quinolinate PRTase C-terminal domain-like"/>
    <property type="match status" value="1"/>
</dbReference>
<dbReference type="SUPFAM" id="SSF54675">
    <property type="entry name" value="Nicotinate/Quinolinate PRTase N-terminal domain-like"/>
    <property type="match status" value="1"/>
</dbReference>
<feature type="chain" id="PRO_0000205834" description="Nicotinate phosphoribosyltransferase">
    <location>
        <begin position="1"/>
        <end position="402"/>
    </location>
</feature>
<feature type="modified residue" description="Phosphohistidine; by autocatalysis" evidence="1">
    <location>
        <position position="224"/>
    </location>
</feature>
<reference key="1">
    <citation type="journal article" date="2000" name="Science">
        <title>Complete genome sequence of Neisseria meningitidis serogroup B strain MC58.</title>
        <authorList>
            <person name="Tettelin H."/>
            <person name="Saunders N.J."/>
            <person name="Heidelberg J.F."/>
            <person name="Jeffries A.C."/>
            <person name="Nelson K.E."/>
            <person name="Eisen J.A."/>
            <person name="Ketchum K.A."/>
            <person name="Hood D.W."/>
            <person name="Peden J.F."/>
            <person name="Dodson R.J."/>
            <person name="Nelson W.C."/>
            <person name="Gwinn M.L."/>
            <person name="DeBoy R.T."/>
            <person name="Peterson J.D."/>
            <person name="Hickey E.K."/>
            <person name="Haft D.H."/>
            <person name="Salzberg S.L."/>
            <person name="White O."/>
            <person name="Fleischmann R.D."/>
            <person name="Dougherty B.A."/>
            <person name="Mason T.M."/>
            <person name="Ciecko A."/>
            <person name="Parksey D.S."/>
            <person name="Blair E."/>
            <person name="Cittone H."/>
            <person name="Clark E.B."/>
            <person name="Cotton M.D."/>
            <person name="Utterback T.R."/>
            <person name="Khouri H.M."/>
            <person name="Qin H."/>
            <person name="Vamathevan J.J."/>
            <person name="Gill J."/>
            <person name="Scarlato V."/>
            <person name="Masignani V."/>
            <person name="Pizza M."/>
            <person name="Grandi G."/>
            <person name="Sun L."/>
            <person name="Smith H.O."/>
            <person name="Fraser C.M."/>
            <person name="Moxon E.R."/>
            <person name="Rappuoli R."/>
            <person name="Venter J.C."/>
        </authorList>
    </citation>
    <scope>NUCLEOTIDE SEQUENCE [LARGE SCALE GENOMIC DNA]</scope>
    <source>
        <strain>ATCC BAA-335 / MC58</strain>
    </source>
</reference>
<evidence type="ECO:0000255" key="1">
    <source>
        <dbReference type="HAMAP-Rule" id="MF_00570"/>
    </source>
</evidence>
<sequence>MTGIIHSLLDTDLYKFTMLQVVLHQFPQTHSLYEFRCRNASTVYPLADIREDLEAELDALCQLRFTHDELGYLRSLRFIKSDFVDYLELFQLQRRFVEIGTDDKDRLNIRIEGPMIQAMFFEIFILAIVNELYFRRLETPAVIEEGERRLQAKAARLKEIAAAQNPDEPPFLISDFGTRRRYKLAWQEHVIRTLLEAAPGIVRGTSNVFLAKKLGITPIGTMAHEFLQAFQALDVRLRNFQKAALESWVHEYRGDLGVALTDVVGMDAFLRDFDLYFAKLFDGLRHDSGDPYVWGDKAYAHYQKLKIDSRTKMLTFSDGLDIERSWALHQYFKDRFKTGFGIGTNLTNDMGHTPLNIVLKLVECNGQSVAKLSDSPGKTMTNNSTFLAYLRQVFDVPEPETP</sequence>
<accession>Q9JYM9</accession>
<comment type="function">
    <text evidence="1">Catalyzes the synthesis of beta-nicotinate D-ribonucleotide from nicotinate and 5-phospho-D-ribose 1-phosphate at the expense of ATP.</text>
</comment>
<comment type="catalytic activity">
    <reaction evidence="1">
        <text>nicotinate + 5-phospho-alpha-D-ribose 1-diphosphate + ATP + H2O = nicotinate beta-D-ribonucleotide + ADP + phosphate + diphosphate</text>
        <dbReference type="Rhea" id="RHEA:36163"/>
        <dbReference type="ChEBI" id="CHEBI:15377"/>
        <dbReference type="ChEBI" id="CHEBI:30616"/>
        <dbReference type="ChEBI" id="CHEBI:32544"/>
        <dbReference type="ChEBI" id="CHEBI:33019"/>
        <dbReference type="ChEBI" id="CHEBI:43474"/>
        <dbReference type="ChEBI" id="CHEBI:57502"/>
        <dbReference type="ChEBI" id="CHEBI:58017"/>
        <dbReference type="ChEBI" id="CHEBI:456216"/>
        <dbReference type="EC" id="6.3.4.21"/>
    </reaction>
</comment>
<comment type="pathway">
    <text evidence="1">Cofactor biosynthesis; NAD(+) biosynthesis; nicotinate D-ribonucleotide from nicotinate: step 1/1.</text>
</comment>
<comment type="PTM">
    <text evidence="1">Transiently phosphorylated on a His residue during the reaction cycle. Phosphorylation strongly increases the affinity for substrates and increases the rate of nicotinate D-ribonucleotide production. Dephosphorylation regenerates the low-affinity form of the enzyme, leading to product release.</text>
</comment>
<comment type="similarity">
    <text evidence="1">Belongs to the NAPRTase family.</text>
</comment>
<name>PNCB_NEIMB</name>
<keyword id="KW-0436">Ligase</keyword>
<keyword id="KW-0597">Phosphoprotein</keyword>
<keyword id="KW-0662">Pyridine nucleotide biosynthesis</keyword>
<keyword id="KW-1185">Reference proteome</keyword>
<protein>
    <recommendedName>
        <fullName evidence="1">Nicotinate phosphoribosyltransferase</fullName>
        <shortName evidence="1">NAPRTase</shortName>
        <ecNumber evidence="1">6.3.4.21</ecNumber>
    </recommendedName>
</protein>